<sequence>MEQNRFKKETKTCSASWPRAPQSTLCATDRLELTYDVYTSAERQRRSRTATRLNLVFLHGSGMSKVVWEYYLPRLVAADAEGNYAIDKVLLIDQVNHGDSAVRNRGRLGTNFNWIDGARDVLKIATCELGSIDSHPALNVVIGHSMGGFQALACDVLQPNLFHLLILIEPVVITRKAIGAGRPGLPPDSPQIPENLYNSLRLKTCDHFANESEYVKYMRNGSFFTNAHSQILQNIIDFERTKASGDDEDGGPVRTKMEQAQNLLCYMNMQTFAPFLISNVKFVRKRTIHIVGARSNWCPPQNQLFLQKTLQNYHLDVIPGGSHLVNVEAPDLVIERINHHIHEFVLTSPLQSSHIPQLTLEERAVMFDRAFDSFKNEALVKTTKQKL</sequence>
<feature type="chain" id="PRO_0000270570" description="Peroxisomal membrane protein LPX1">
    <location>
        <begin position="1"/>
        <end position="387"/>
    </location>
</feature>
<feature type="region of interest" description="Peroxisomal targeting signal type 1">
    <location>
        <begin position="385"/>
        <end position="387"/>
    </location>
</feature>
<feature type="strand" evidence="6">
    <location>
        <begin position="5"/>
        <end position="14"/>
    </location>
</feature>
<feature type="strand" evidence="6">
    <location>
        <begin position="23"/>
        <end position="26"/>
    </location>
</feature>
<feature type="strand" evidence="6">
    <location>
        <begin position="32"/>
        <end position="41"/>
    </location>
</feature>
<feature type="turn" evidence="6">
    <location>
        <begin position="43"/>
        <end position="45"/>
    </location>
</feature>
<feature type="strand" evidence="6">
    <location>
        <begin position="51"/>
        <end position="58"/>
    </location>
</feature>
<feature type="helix" evidence="6">
    <location>
        <begin position="65"/>
        <end position="74"/>
    </location>
</feature>
<feature type="turn" evidence="6">
    <location>
        <begin position="80"/>
        <end position="83"/>
    </location>
</feature>
<feature type="strand" evidence="6">
    <location>
        <begin position="84"/>
        <end position="92"/>
    </location>
</feature>
<feature type="helix" evidence="6">
    <location>
        <begin position="98"/>
        <end position="103"/>
    </location>
</feature>
<feature type="turn" evidence="6">
    <location>
        <begin position="104"/>
        <end position="107"/>
    </location>
</feature>
<feature type="helix" evidence="6">
    <location>
        <begin position="114"/>
        <end position="128"/>
    </location>
</feature>
<feature type="helix" evidence="7">
    <location>
        <begin position="132"/>
        <end position="134"/>
    </location>
</feature>
<feature type="strand" evidence="6">
    <location>
        <begin position="136"/>
        <end position="144"/>
    </location>
</feature>
<feature type="helix" evidence="6">
    <location>
        <begin position="146"/>
        <end position="157"/>
    </location>
</feature>
<feature type="strand" evidence="6">
    <location>
        <begin position="163"/>
        <end position="169"/>
    </location>
</feature>
<feature type="helix" evidence="6">
    <location>
        <begin position="194"/>
        <end position="202"/>
    </location>
</feature>
<feature type="strand" evidence="6">
    <location>
        <begin position="207"/>
        <end position="210"/>
    </location>
</feature>
<feature type="helix" evidence="6">
    <location>
        <begin position="211"/>
        <end position="220"/>
    </location>
</feature>
<feature type="turn" evidence="6">
    <location>
        <begin position="223"/>
        <end position="226"/>
    </location>
</feature>
<feature type="helix" evidence="6">
    <location>
        <begin position="229"/>
        <end position="239"/>
    </location>
</feature>
<feature type="strand" evidence="6">
    <location>
        <begin position="253"/>
        <end position="257"/>
    </location>
</feature>
<feature type="helix" evidence="6">
    <location>
        <begin position="259"/>
        <end position="264"/>
    </location>
</feature>
<feature type="helix" evidence="6">
    <location>
        <begin position="269"/>
        <end position="271"/>
    </location>
</feature>
<feature type="helix" evidence="6">
    <location>
        <begin position="273"/>
        <end position="279"/>
    </location>
</feature>
<feature type="helix" evidence="6">
    <location>
        <begin position="280"/>
        <end position="282"/>
    </location>
</feature>
<feature type="strand" evidence="6">
    <location>
        <begin position="285"/>
        <end position="292"/>
    </location>
</feature>
<feature type="helix" evidence="6">
    <location>
        <begin position="300"/>
        <end position="309"/>
    </location>
</feature>
<feature type="strand" evidence="6">
    <location>
        <begin position="311"/>
        <end position="318"/>
    </location>
</feature>
<feature type="helix" evidence="6">
    <location>
        <begin position="325"/>
        <end position="328"/>
    </location>
</feature>
<feature type="helix" evidence="6">
    <location>
        <begin position="330"/>
        <end position="347"/>
    </location>
</feature>
<feature type="helix" evidence="6">
    <location>
        <begin position="360"/>
        <end position="378"/>
    </location>
</feature>
<feature type="helix" evidence="7">
    <location>
        <begin position="383"/>
        <end position="386"/>
    </location>
</feature>
<proteinExistence type="evidence at protein level"/>
<dbReference type="EC" id="3.1.1.-"/>
<dbReference type="EMBL" id="X94335">
    <property type="protein sequence ID" value="CAA64006.1"/>
    <property type="molecule type" value="Genomic_DNA"/>
</dbReference>
<dbReference type="EMBL" id="Z74992">
    <property type="protein sequence ID" value="CAA99279.1"/>
    <property type="molecule type" value="Genomic_DNA"/>
</dbReference>
<dbReference type="EMBL" id="AY692642">
    <property type="protein sequence ID" value="AAT92661.1"/>
    <property type="molecule type" value="Genomic_DNA"/>
</dbReference>
<dbReference type="EMBL" id="BK006948">
    <property type="protein sequence ID" value="DAA10862.1"/>
    <property type="molecule type" value="Genomic_DNA"/>
</dbReference>
<dbReference type="PIR" id="S61645">
    <property type="entry name" value="S61645"/>
</dbReference>
<dbReference type="RefSeq" id="NP_014727.1">
    <property type="nucleotide sequence ID" value="NM_001183503.1"/>
</dbReference>
<dbReference type="PDB" id="2Y6U">
    <property type="method" value="X-ray"/>
    <property type="resolution" value="1.90 A"/>
    <property type="chains" value="A=1-387"/>
</dbReference>
<dbReference type="PDB" id="2Y6V">
    <property type="method" value="X-ray"/>
    <property type="resolution" value="2.83 A"/>
    <property type="chains" value="A/B/C=1-387"/>
</dbReference>
<dbReference type="PDBsum" id="2Y6U"/>
<dbReference type="PDBsum" id="2Y6V"/>
<dbReference type="SMR" id="Q12405"/>
<dbReference type="BioGRID" id="34482">
    <property type="interactions" value="65"/>
</dbReference>
<dbReference type="DIP" id="DIP-2772N"/>
<dbReference type="FunCoup" id="Q12405">
    <property type="interactions" value="74"/>
</dbReference>
<dbReference type="IntAct" id="Q12405">
    <property type="interactions" value="3"/>
</dbReference>
<dbReference type="MINT" id="Q12405"/>
<dbReference type="STRING" id="4932.YOR084W"/>
<dbReference type="ESTHER" id="yeast-YOR084W">
    <property type="family name" value="6_AlphaBeta_hydrolase"/>
</dbReference>
<dbReference type="MEROPS" id="S33.022"/>
<dbReference type="iPTMnet" id="Q12405"/>
<dbReference type="PaxDb" id="4932-YOR084W"/>
<dbReference type="PeptideAtlas" id="Q12405"/>
<dbReference type="EnsemblFungi" id="YOR084W_mRNA">
    <property type="protein sequence ID" value="YOR084W"/>
    <property type="gene ID" value="YOR084W"/>
</dbReference>
<dbReference type="GeneID" id="854251"/>
<dbReference type="KEGG" id="sce:YOR084W"/>
<dbReference type="AGR" id="SGD:S000005610"/>
<dbReference type="SGD" id="S000005610">
    <property type="gene designation" value="LPX1"/>
</dbReference>
<dbReference type="VEuPathDB" id="FungiDB:YOR084W"/>
<dbReference type="eggNOG" id="ENOG502QT3R">
    <property type="taxonomic scope" value="Eukaryota"/>
</dbReference>
<dbReference type="HOGENOM" id="CLU_061432_0_0_1"/>
<dbReference type="InParanoid" id="Q12405"/>
<dbReference type="OMA" id="DQVTHGD"/>
<dbReference type="OrthoDB" id="94039at2759"/>
<dbReference type="BioCyc" id="YEAST:G3O-33620-MONOMER"/>
<dbReference type="SABIO-RK" id="Q12405"/>
<dbReference type="BioGRID-ORCS" id="854251">
    <property type="hits" value="3 hits in 10 CRISPR screens"/>
</dbReference>
<dbReference type="EvolutionaryTrace" id="Q12405"/>
<dbReference type="PRO" id="PR:Q12405"/>
<dbReference type="Proteomes" id="UP000002311">
    <property type="component" value="Chromosome XV"/>
</dbReference>
<dbReference type="RNAct" id="Q12405">
    <property type="molecule type" value="protein"/>
</dbReference>
<dbReference type="GO" id="GO:0005782">
    <property type="term" value="C:peroxisomal matrix"/>
    <property type="evidence" value="ECO:0000314"/>
    <property type="project" value="SGD"/>
</dbReference>
<dbReference type="GO" id="GO:0004806">
    <property type="term" value="F:triacylglycerol lipase activity"/>
    <property type="evidence" value="ECO:0000314"/>
    <property type="project" value="SGD"/>
</dbReference>
<dbReference type="GO" id="GO:0019433">
    <property type="term" value="P:triglyceride catabolic process"/>
    <property type="evidence" value="ECO:0000316"/>
    <property type="project" value="SGD"/>
</dbReference>
<dbReference type="Gene3D" id="3.40.50.1820">
    <property type="entry name" value="alpha/beta hydrolase"/>
    <property type="match status" value="1"/>
</dbReference>
<dbReference type="InterPro" id="IPR000073">
    <property type="entry name" value="AB_hydrolase_1"/>
</dbReference>
<dbReference type="InterPro" id="IPR029058">
    <property type="entry name" value="AB_hydrolase_fold"/>
</dbReference>
<dbReference type="InterPro" id="IPR050228">
    <property type="entry name" value="Carboxylesterase_BioH"/>
</dbReference>
<dbReference type="PANTHER" id="PTHR43194">
    <property type="entry name" value="HYDROLASE ALPHA/BETA FOLD FAMILY"/>
    <property type="match status" value="1"/>
</dbReference>
<dbReference type="PANTHER" id="PTHR43194:SF2">
    <property type="entry name" value="PEROXISOMAL MEMBRANE PROTEIN LPX1"/>
    <property type="match status" value="1"/>
</dbReference>
<dbReference type="Pfam" id="PF12697">
    <property type="entry name" value="Abhydrolase_6"/>
    <property type="match status" value="1"/>
</dbReference>
<dbReference type="SUPFAM" id="SSF53474">
    <property type="entry name" value="alpha/beta-Hydrolases"/>
    <property type="match status" value="1"/>
</dbReference>
<reference key="1">
    <citation type="journal article" date="1997" name="Yeast">
        <title>DNA sequencing and analysis of 130 kb from yeast chromosome XV.</title>
        <authorList>
            <person name="Voss H."/>
            <person name="Benes V."/>
            <person name="Andrade M.A."/>
            <person name="Valencia A."/>
            <person name="Rechmann S."/>
            <person name="Teodoru C."/>
            <person name="Schwager C."/>
            <person name="Paces V."/>
            <person name="Sander C."/>
            <person name="Ansorge W."/>
        </authorList>
    </citation>
    <scope>NUCLEOTIDE SEQUENCE [GENOMIC DNA]</scope>
</reference>
<reference key="2">
    <citation type="journal article" date="1997" name="Nature">
        <title>The nucleotide sequence of Saccharomyces cerevisiae chromosome XV.</title>
        <authorList>
            <person name="Dujon B."/>
            <person name="Albermann K."/>
            <person name="Aldea M."/>
            <person name="Alexandraki D."/>
            <person name="Ansorge W."/>
            <person name="Arino J."/>
            <person name="Benes V."/>
            <person name="Bohn C."/>
            <person name="Bolotin-Fukuhara M."/>
            <person name="Bordonne R."/>
            <person name="Boyer J."/>
            <person name="Camasses A."/>
            <person name="Casamayor A."/>
            <person name="Casas C."/>
            <person name="Cheret G."/>
            <person name="Cziepluch C."/>
            <person name="Daignan-Fornier B."/>
            <person name="Dang V.-D."/>
            <person name="de Haan M."/>
            <person name="Delius H."/>
            <person name="Durand P."/>
            <person name="Fairhead C."/>
            <person name="Feldmann H."/>
            <person name="Gaillon L."/>
            <person name="Galisson F."/>
            <person name="Gamo F.-J."/>
            <person name="Gancedo C."/>
            <person name="Goffeau A."/>
            <person name="Goulding S.E."/>
            <person name="Grivell L.A."/>
            <person name="Habbig B."/>
            <person name="Hand N.J."/>
            <person name="Hani J."/>
            <person name="Hattenhorst U."/>
            <person name="Hebling U."/>
            <person name="Hernando Y."/>
            <person name="Herrero E."/>
            <person name="Heumann K."/>
            <person name="Hiesel R."/>
            <person name="Hilger F."/>
            <person name="Hofmann B."/>
            <person name="Hollenberg C.P."/>
            <person name="Hughes B."/>
            <person name="Jauniaux J.-C."/>
            <person name="Kalogeropoulos A."/>
            <person name="Katsoulou C."/>
            <person name="Kordes E."/>
            <person name="Lafuente M.J."/>
            <person name="Landt O."/>
            <person name="Louis E.J."/>
            <person name="Maarse A.C."/>
            <person name="Madania A."/>
            <person name="Mannhaupt G."/>
            <person name="Marck C."/>
            <person name="Martin R.P."/>
            <person name="Mewes H.-W."/>
            <person name="Michaux G."/>
            <person name="Paces V."/>
            <person name="Parle-McDermott A.G."/>
            <person name="Pearson B.M."/>
            <person name="Perrin A."/>
            <person name="Pettersson B."/>
            <person name="Poch O."/>
            <person name="Pohl T.M."/>
            <person name="Poirey R."/>
            <person name="Portetelle D."/>
            <person name="Pujol A."/>
            <person name="Purnelle B."/>
            <person name="Ramezani Rad M."/>
            <person name="Rechmann S."/>
            <person name="Schwager C."/>
            <person name="Schweizer M."/>
            <person name="Sor F."/>
            <person name="Sterky F."/>
            <person name="Tarassov I.A."/>
            <person name="Teodoru C."/>
            <person name="Tettelin H."/>
            <person name="Thierry A."/>
            <person name="Tobiasch E."/>
            <person name="Tzermia M."/>
            <person name="Uhlen M."/>
            <person name="Unseld M."/>
            <person name="Valens M."/>
            <person name="Vandenbol M."/>
            <person name="Vetter I."/>
            <person name="Vlcek C."/>
            <person name="Voet M."/>
            <person name="Volckaert G."/>
            <person name="Voss H."/>
            <person name="Wambutt R."/>
            <person name="Wedler H."/>
            <person name="Wiemann S."/>
            <person name="Winsor B."/>
            <person name="Wolfe K.H."/>
            <person name="Zollner A."/>
            <person name="Zumstein E."/>
            <person name="Kleine K."/>
        </authorList>
    </citation>
    <scope>NUCLEOTIDE SEQUENCE [LARGE SCALE GENOMIC DNA]</scope>
    <source>
        <strain>ATCC 204508 / S288c</strain>
    </source>
</reference>
<reference key="3">
    <citation type="journal article" date="2014" name="G3 (Bethesda)">
        <title>The reference genome sequence of Saccharomyces cerevisiae: Then and now.</title>
        <authorList>
            <person name="Engel S.R."/>
            <person name="Dietrich F.S."/>
            <person name="Fisk D.G."/>
            <person name="Binkley G."/>
            <person name="Balakrishnan R."/>
            <person name="Costanzo M.C."/>
            <person name="Dwight S.S."/>
            <person name="Hitz B.C."/>
            <person name="Karra K."/>
            <person name="Nash R.S."/>
            <person name="Weng S."/>
            <person name="Wong E.D."/>
            <person name="Lloyd P."/>
            <person name="Skrzypek M.S."/>
            <person name="Miyasato S.R."/>
            <person name="Simison M."/>
            <person name="Cherry J.M."/>
        </authorList>
    </citation>
    <scope>GENOME REANNOTATION</scope>
    <source>
        <strain>ATCC 204508 / S288c</strain>
    </source>
</reference>
<reference key="4">
    <citation type="journal article" date="2007" name="Genome Res.">
        <title>Approaching a complete repository of sequence-verified protein-encoding clones for Saccharomyces cerevisiae.</title>
        <authorList>
            <person name="Hu Y."/>
            <person name="Rolfs A."/>
            <person name="Bhullar B."/>
            <person name="Murthy T.V.S."/>
            <person name="Zhu C."/>
            <person name="Berger M.F."/>
            <person name="Camargo A.A."/>
            <person name="Kelley F."/>
            <person name="McCarron S."/>
            <person name="Jepson D."/>
            <person name="Richardson A."/>
            <person name="Raphael J."/>
            <person name="Moreira D."/>
            <person name="Taycher E."/>
            <person name="Zuo D."/>
            <person name="Mohr S."/>
            <person name="Kane M.F."/>
            <person name="Williamson J."/>
            <person name="Simpson A.J.G."/>
            <person name="Bulyk M.L."/>
            <person name="Harlow E."/>
            <person name="Marsischky G."/>
            <person name="Kolodner R.D."/>
            <person name="LaBaer J."/>
        </authorList>
    </citation>
    <scope>NUCLEOTIDE SEQUENCE [GENOMIC DNA]</scope>
    <source>
        <strain>ATCC 204508 / S288c</strain>
    </source>
</reference>
<reference key="5">
    <citation type="journal article" date="2002" name="J. Cell Biol.">
        <title>Transcriptome profiling to identify genes involved in peroxisome assembly and function.</title>
        <authorList>
            <person name="Smith J.J."/>
            <person name="Marelli M."/>
            <person name="Christmas R.H."/>
            <person name="Vizeacoumar F.J."/>
            <person name="Dilworth D.J."/>
            <person name="Ideker T."/>
            <person name="Galitski T."/>
            <person name="Dimitrov K."/>
            <person name="Rachubinski R.A."/>
            <person name="Aitchison J.D."/>
        </authorList>
    </citation>
    <scope>SUBCELLULAR LOCATION</scope>
    <scope>INDUCTION</scope>
</reference>
<reference key="6">
    <citation type="journal article" date="2003" name="J. Biol. Chem.">
        <title>Competitive promoter occupancy by two yeast paralogous transcription factors controlling the multidrug resistance phenomenon.</title>
        <authorList>
            <person name="Lucau-Danila A."/>
            <person name="Delaveau T."/>
            <person name="Lelandais G."/>
            <person name="Devaux F."/>
            <person name="Jacq C."/>
        </authorList>
    </citation>
    <scope>INDUCTION</scope>
</reference>
<reference key="7">
    <citation type="journal article" date="2003" name="Nature">
        <title>Global analysis of protein expression in yeast.</title>
        <authorList>
            <person name="Ghaemmaghami S."/>
            <person name="Huh W.-K."/>
            <person name="Bower K."/>
            <person name="Howson R.W."/>
            <person name="Belle A."/>
            <person name="Dephoure N."/>
            <person name="O'Shea E.K."/>
            <person name="Weissman J.S."/>
        </authorList>
    </citation>
    <scope>LEVEL OF PROTEIN EXPRESSION [LARGE SCALE ANALYSIS]</scope>
</reference>
<reference key="8">
    <citation type="journal article" date="2008" name="FEBS J.">
        <title>Lpx1p is a peroxisomal lipase required for normal peroxisome morphology.</title>
        <authorList>
            <person name="Thoms S."/>
            <person name="Debelyy M.O."/>
            <person name="Nau K."/>
            <person name="Meyer H.E."/>
            <person name="Erdmann R."/>
        </authorList>
    </citation>
    <scope>FUNCTION</scope>
    <scope>BIOPHYSICOCHEMICAL PROPERTIES</scope>
    <scope>SUBCELLULAR LOCATION</scope>
    <scope>INDUCTION</scope>
    <scope>DISRUPTION PHENOTYPE</scope>
    <scope>REGION</scope>
    <scope>IDENTIFICATION BY MASS SPECTROMETRY</scope>
</reference>
<reference key="9">
    <citation type="journal article" date="2009" name="Yeast">
        <title>Rsf1p is required for an efficient metabolic shift from fermentative to glycerol-based respiratory growth in S. cerevisiae.</title>
        <authorList>
            <person name="Roberts G.G. III"/>
            <person name="Hudson A.P."/>
        </authorList>
    </citation>
    <scope>INDUCTION</scope>
</reference>
<name>LPX1_YEAST</name>
<organism>
    <name type="scientific">Saccharomyces cerevisiae (strain ATCC 204508 / S288c)</name>
    <name type="common">Baker's yeast</name>
    <dbReference type="NCBI Taxonomy" id="559292"/>
    <lineage>
        <taxon>Eukaryota</taxon>
        <taxon>Fungi</taxon>
        <taxon>Dikarya</taxon>
        <taxon>Ascomycota</taxon>
        <taxon>Saccharomycotina</taxon>
        <taxon>Saccharomycetes</taxon>
        <taxon>Saccharomycetales</taxon>
        <taxon>Saccharomycetaceae</taxon>
        <taxon>Saccharomyces</taxon>
    </lineage>
</organism>
<protein>
    <recommendedName>
        <fullName>Peroxisomal membrane protein LPX1</fullName>
        <ecNumber>3.1.1.-</ecNumber>
    </recommendedName>
    <alternativeName>
        <fullName>Lipase of peroxisomes protein 1</fullName>
    </alternativeName>
</protein>
<evidence type="ECO:0000269" key="1">
    <source>
    </source>
</evidence>
<evidence type="ECO:0000269" key="2">
    <source>
    </source>
</evidence>
<evidence type="ECO:0000269" key="3">
    <source>
    </source>
</evidence>
<evidence type="ECO:0000269" key="4">
    <source>
    </source>
</evidence>
<evidence type="ECO:0000269" key="5">
    <source>
    </source>
</evidence>
<evidence type="ECO:0007829" key="6">
    <source>
        <dbReference type="PDB" id="2Y6U"/>
    </source>
</evidence>
<evidence type="ECO:0007829" key="7">
    <source>
        <dbReference type="PDB" id="2Y6V"/>
    </source>
</evidence>
<comment type="function">
    <text evidence="4">Has acyl esterase, lipase and phospholipase A activity.</text>
</comment>
<comment type="biophysicochemical properties">
    <kinetics>
        <KM evidence="4">6.3 uM for p-nitrophenyl butyrate (PNB)</KM>
        <Vmax evidence="4">5.6 pmol/h/ug enzyme toward 1,2-dioleoyl-3-(pyren-1-yl)decanoyl-rac-glycerol (DPG)</Vmax>
        <Vmax evidence="4">7.9 pmol/h/ug enzyme toward 1,2-bis-(4,4-difluoro-5,7-dimethyl-4-bora-3a,4a-diaza-sindacene-3-undecanoyl)-sn-glycero-3-phosphocholine (BPC)</Vmax>
    </kinetics>
</comment>
<comment type="subcellular location">
    <subcellularLocation>
        <location evidence="1 4">Peroxisome matrix</location>
    </subcellularLocation>
    <text>Peroxisomal import is dependent on the peroxisomal targeting signal type 1 (PTS1) receptor PEX5 and on self-interaction.</text>
</comment>
<comment type="induction">
    <text evidence="1 2 4 5">By oleic acid. Transcriptionally up-regulated by YRM1 along with genes involved in multidrug resistance. Expression is also dependent on RSF1 and RSF2 for transcriptional induction during growth on glycerol-based medium.</text>
</comment>
<comment type="disruption phenotype">
    <text evidence="4">Aberrant morphology characterized by intraperoxisomal vesicles or invaginations.</text>
</comment>
<comment type="miscellaneous">
    <text evidence="3">Present with 2350 molecules/cell in log phase SD medium.</text>
</comment>
<gene>
    <name type="primary">LPX1</name>
    <name type="ordered locus">YOR084W</name>
    <name type="ORF">YOR3120W</name>
</gene>
<keyword id="KW-0002">3D-structure</keyword>
<keyword id="KW-0378">Hydrolase</keyword>
<keyword id="KW-0576">Peroxisome</keyword>
<keyword id="KW-1185">Reference proteome</keyword>
<accession>Q12405</accession>
<accession>D6W2E6</accession>